<dbReference type="EMBL" id="AAEY01000042">
    <property type="protein sequence ID" value="EAL19315.1"/>
    <property type="molecule type" value="Genomic_DNA"/>
</dbReference>
<dbReference type="RefSeq" id="XP_773962.1">
    <property type="nucleotide sequence ID" value="XM_768869.1"/>
</dbReference>
<dbReference type="SMR" id="P0CQ57"/>
<dbReference type="EnsemblFungi" id="AAW45611">
    <property type="protein sequence ID" value="AAW45611"/>
    <property type="gene ID" value="CNI04340"/>
</dbReference>
<dbReference type="GeneID" id="4937943"/>
<dbReference type="KEGG" id="cnb:CNBH4140"/>
<dbReference type="VEuPathDB" id="FungiDB:CNBH4140"/>
<dbReference type="HOGENOM" id="CLU_058171_1_0_1"/>
<dbReference type="OrthoDB" id="6389at5206"/>
<dbReference type="GO" id="GO:0022627">
    <property type="term" value="C:cytosolic small ribosomal subunit"/>
    <property type="evidence" value="ECO:0007669"/>
    <property type="project" value="UniProtKB-UniRule"/>
</dbReference>
<dbReference type="GO" id="GO:0003735">
    <property type="term" value="F:structural constituent of ribosome"/>
    <property type="evidence" value="ECO:0007669"/>
    <property type="project" value="UniProtKB-UniRule"/>
</dbReference>
<dbReference type="GO" id="GO:0000028">
    <property type="term" value="P:ribosomal small subunit assembly"/>
    <property type="evidence" value="ECO:0007669"/>
    <property type="project" value="UniProtKB-UniRule"/>
</dbReference>
<dbReference type="GO" id="GO:0006412">
    <property type="term" value="P:translation"/>
    <property type="evidence" value="ECO:0007669"/>
    <property type="project" value="UniProtKB-UniRule"/>
</dbReference>
<dbReference type="CDD" id="cd01425">
    <property type="entry name" value="RPS2"/>
    <property type="match status" value="1"/>
</dbReference>
<dbReference type="FunFam" id="3.40.50.10490:FF:000010">
    <property type="entry name" value="40S ribosomal protein S0"/>
    <property type="match status" value="1"/>
</dbReference>
<dbReference type="Gene3D" id="3.40.50.10490">
    <property type="entry name" value="Glucose-6-phosphate isomerase like protein, domain 1"/>
    <property type="match status" value="1"/>
</dbReference>
<dbReference type="HAMAP" id="MF_03015">
    <property type="entry name" value="Ribosomal_S2_euk"/>
    <property type="match status" value="1"/>
</dbReference>
<dbReference type="InterPro" id="IPR001865">
    <property type="entry name" value="Ribosomal_uS2"/>
</dbReference>
<dbReference type="InterPro" id="IPR032281">
    <property type="entry name" value="Ribosomal_uS2_C"/>
</dbReference>
<dbReference type="InterPro" id="IPR018130">
    <property type="entry name" value="Ribosomal_uS2_CS"/>
</dbReference>
<dbReference type="InterPro" id="IPR027498">
    <property type="entry name" value="Ribosomal_uS2_euk"/>
</dbReference>
<dbReference type="InterPro" id="IPR005707">
    <property type="entry name" value="Ribosomal_uS2_euk/arc"/>
</dbReference>
<dbReference type="InterPro" id="IPR023591">
    <property type="entry name" value="Ribosomal_uS2_flav_dom_sf"/>
</dbReference>
<dbReference type="NCBIfam" id="TIGR01012">
    <property type="entry name" value="uS2_euk_arch"/>
    <property type="match status" value="1"/>
</dbReference>
<dbReference type="PANTHER" id="PTHR11489">
    <property type="entry name" value="40S RIBOSOMAL PROTEIN SA"/>
    <property type="match status" value="1"/>
</dbReference>
<dbReference type="Pfam" id="PF16122">
    <property type="entry name" value="40S_SA_C"/>
    <property type="match status" value="1"/>
</dbReference>
<dbReference type="Pfam" id="PF00318">
    <property type="entry name" value="Ribosomal_S2"/>
    <property type="match status" value="2"/>
</dbReference>
<dbReference type="PRINTS" id="PR00395">
    <property type="entry name" value="RIBOSOMALS2"/>
</dbReference>
<dbReference type="SUPFAM" id="SSF52313">
    <property type="entry name" value="Ribosomal protein S2"/>
    <property type="match status" value="1"/>
</dbReference>
<dbReference type="PROSITE" id="PS00963">
    <property type="entry name" value="RIBOSOMAL_S2_2"/>
    <property type="match status" value="1"/>
</dbReference>
<sequence>MSADKLPKALQATEDDIQLLLAAQCHLGTKNCDKSMENYVWKRRADGIHVINVGKTWEKLVLAARVLATIENPNDVCVISARPYGHRAVLKYGSFTGAQAIAGRFTPGSFTNYITRSFKEPRVIIVTDPRVDHQAIREAAYVNIPVIAFCDTDASTKFVDIAIPANNKSRHSIGLMWYLLCREVLRLRGTVPRGPTGPSGWDVLPDLFFYRDPEEIEREAAEKAAAAAAQEGADAEAAATSAAAGVTAEYDAGNAADAVLAAQPTETALDWSDEPVAGDWAAEPAADAQGGW</sequence>
<keyword id="KW-0963">Cytoplasm</keyword>
<keyword id="KW-0687">Ribonucleoprotein</keyword>
<keyword id="KW-0689">Ribosomal protein</keyword>
<feature type="chain" id="PRO_0000410239" description="Small ribosomal subunit protein uS2">
    <location>
        <begin position="1"/>
        <end position="292"/>
    </location>
</feature>
<feature type="region of interest" description="Disordered" evidence="2">
    <location>
        <begin position="265"/>
        <end position="292"/>
    </location>
</feature>
<feature type="compositionally biased region" description="Low complexity" evidence="2">
    <location>
        <begin position="277"/>
        <end position="292"/>
    </location>
</feature>
<evidence type="ECO:0000255" key="1">
    <source>
        <dbReference type="HAMAP-Rule" id="MF_03015"/>
    </source>
</evidence>
<evidence type="ECO:0000256" key="2">
    <source>
        <dbReference type="SAM" id="MobiDB-lite"/>
    </source>
</evidence>
<evidence type="ECO:0000305" key="3"/>
<name>RSSA_CRYNB</name>
<protein>
    <recommendedName>
        <fullName evidence="1">Small ribosomal subunit protein uS2</fullName>
    </recommendedName>
    <alternativeName>
        <fullName evidence="3">40S ribosomal protein S0</fullName>
    </alternativeName>
</protein>
<comment type="function">
    <text evidence="1">Required for the assembly and/or stability of the 40S ribosomal subunit. Required for the processing of the 20S rRNA-precursor to mature 18S rRNA in a late step of the maturation of 40S ribosomal subunits.</text>
</comment>
<comment type="subunit">
    <text evidence="1">Component of the small ribosomal subunit. Mature ribosomes consist of a small (40S) and a large (60S) subunit. The 40S subunit contains about 33 different proteins and 1 molecule of RNA (18S). The 60S subunit contains about 49 different proteins and 3 molecules of RNA (25S, 5.8S and 5S). Interacts with RPS21.</text>
</comment>
<comment type="subcellular location">
    <subcellularLocation>
        <location evidence="1">Cytoplasm</location>
    </subcellularLocation>
</comment>
<comment type="similarity">
    <text evidence="1">Belongs to the universal ribosomal protein uS2 family.</text>
</comment>
<organism>
    <name type="scientific">Cryptococcus neoformans var. neoformans serotype D (strain B-3501A)</name>
    <name type="common">Filobasidiella neoformans</name>
    <dbReference type="NCBI Taxonomy" id="283643"/>
    <lineage>
        <taxon>Eukaryota</taxon>
        <taxon>Fungi</taxon>
        <taxon>Dikarya</taxon>
        <taxon>Basidiomycota</taxon>
        <taxon>Agaricomycotina</taxon>
        <taxon>Tremellomycetes</taxon>
        <taxon>Tremellales</taxon>
        <taxon>Cryptococcaceae</taxon>
        <taxon>Cryptococcus</taxon>
        <taxon>Cryptococcus neoformans species complex</taxon>
    </lineage>
</organism>
<reference key="1">
    <citation type="journal article" date="2005" name="Science">
        <title>The genome of the basidiomycetous yeast and human pathogen Cryptococcus neoformans.</title>
        <authorList>
            <person name="Loftus B.J."/>
            <person name="Fung E."/>
            <person name="Roncaglia P."/>
            <person name="Rowley D."/>
            <person name="Amedeo P."/>
            <person name="Bruno D."/>
            <person name="Vamathevan J."/>
            <person name="Miranda M."/>
            <person name="Anderson I.J."/>
            <person name="Fraser J.A."/>
            <person name="Allen J.E."/>
            <person name="Bosdet I.E."/>
            <person name="Brent M.R."/>
            <person name="Chiu R."/>
            <person name="Doering T.L."/>
            <person name="Donlin M.J."/>
            <person name="D'Souza C.A."/>
            <person name="Fox D.S."/>
            <person name="Grinberg V."/>
            <person name="Fu J."/>
            <person name="Fukushima M."/>
            <person name="Haas B.J."/>
            <person name="Huang J.C."/>
            <person name="Janbon G."/>
            <person name="Jones S.J.M."/>
            <person name="Koo H.L."/>
            <person name="Krzywinski M.I."/>
            <person name="Kwon-Chung K.J."/>
            <person name="Lengeler K.B."/>
            <person name="Maiti R."/>
            <person name="Marra M.A."/>
            <person name="Marra R.E."/>
            <person name="Mathewson C.A."/>
            <person name="Mitchell T.G."/>
            <person name="Pertea M."/>
            <person name="Riggs F.R."/>
            <person name="Salzberg S.L."/>
            <person name="Schein J.E."/>
            <person name="Shvartsbeyn A."/>
            <person name="Shin H."/>
            <person name="Shumway M."/>
            <person name="Specht C.A."/>
            <person name="Suh B.B."/>
            <person name="Tenney A."/>
            <person name="Utterback T.R."/>
            <person name="Wickes B.L."/>
            <person name="Wortman J.R."/>
            <person name="Wye N.H."/>
            <person name="Kronstad J.W."/>
            <person name="Lodge J.K."/>
            <person name="Heitman J."/>
            <person name="Davis R.W."/>
            <person name="Fraser C.M."/>
            <person name="Hyman R.W."/>
        </authorList>
    </citation>
    <scope>NUCLEOTIDE SEQUENCE [LARGE SCALE GENOMIC DNA]</scope>
    <source>
        <strain>B-3501A</strain>
    </source>
</reference>
<accession>P0CQ57</accession>
<accession>Q55MM0</accession>
<accession>Q5KAZ6</accession>
<gene>
    <name evidence="1" type="primary">RPS0</name>
    <name type="ordered locus">CNBH4140</name>
</gene>
<proteinExistence type="inferred from homology"/>